<reference key="1">
    <citation type="submission" date="2008-02" db="EMBL/GenBank/DDBJ databases">
        <title>Complete sequence of Pseudomonas putida W619.</title>
        <authorList>
            <person name="Copeland A."/>
            <person name="Lucas S."/>
            <person name="Lapidus A."/>
            <person name="Barry K."/>
            <person name="Detter J.C."/>
            <person name="Glavina del Rio T."/>
            <person name="Dalin E."/>
            <person name="Tice H."/>
            <person name="Pitluck S."/>
            <person name="Chain P."/>
            <person name="Malfatti S."/>
            <person name="Shin M."/>
            <person name="Vergez L."/>
            <person name="Schmutz J."/>
            <person name="Larimer F."/>
            <person name="Land M."/>
            <person name="Hauser L."/>
            <person name="Kyrpides N."/>
            <person name="Kim E."/>
            <person name="Taghavi S."/>
            <person name="Vangronsveld D."/>
            <person name="van der Lelie D."/>
            <person name="Richardson P."/>
        </authorList>
    </citation>
    <scope>NUCLEOTIDE SEQUENCE [LARGE SCALE GENOMIC DNA]</scope>
    <source>
        <strain>W619</strain>
    </source>
</reference>
<gene>
    <name evidence="1" type="primary">rplW</name>
    <name type="ordered locus">PputW619_4747</name>
</gene>
<feature type="chain" id="PRO_1000144601" description="Large ribosomal subunit protein uL23">
    <location>
        <begin position="1"/>
        <end position="99"/>
    </location>
</feature>
<protein>
    <recommendedName>
        <fullName evidence="1">Large ribosomal subunit protein uL23</fullName>
    </recommendedName>
    <alternativeName>
        <fullName evidence="2">50S ribosomal protein L23</fullName>
    </alternativeName>
</protein>
<dbReference type="EMBL" id="CP000949">
    <property type="protein sequence ID" value="ACA75223.1"/>
    <property type="molecule type" value="Genomic_DNA"/>
</dbReference>
<dbReference type="SMR" id="B1JDW2"/>
<dbReference type="STRING" id="390235.PputW619_4747"/>
<dbReference type="KEGG" id="ppw:PputW619_4747"/>
<dbReference type="eggNOG" id="COG0089">
    <property type="taxonomic scope" value="Bacteria"/>
</dbReference>
<dbReference type="HOGENOM" id="CLU_037562_3_1_6"/>
<dbReference type="OrthoDB" id="9793353at2"/>
<dbReference type="GO" id="GO:1990904">
    <property type="term" value="C:ribonucleoprotein complex"/>
    <property type="evidence" value="ECO:0007669"/>
    <property type="project" value="UniProtKB-KW"/>
</dbReference>
<dbReference type="GO" id="GO:0005840">
    <property type="term" value="C:ribosome"/>
    <property type="evidence" value="ECO:0007669"/>
    <property type="project" value="UniProtKB-KW"/>
</dbReference>
<dbReference type="GO" id="GO:0019843">
    <property type="term" value="F:rRNA binding"/>
    <property type="evidence" value="ECO:0007669"/>
    <property type="project" value="UniProtKB-UniRule"/>
</dbReference>
<dbReference type="GO" id="GO:0003735">
    <property type="term" value="F:structural constituent of ribosome"/>
    <property type="evidence" value="ECO:0007669"/>
    <property type="project" value="InterPro"/>
</dbReference>
<dbReference type="GO" id="GO:0006412">
    <property type="term" value="P:translation"/>
    <property type="evidence" value="ECO:0007669"/>
    <property type="project" value="UniProtKB-UniRule"/>
</dbReference>
<dbReference type="FunFam" id="3.30.70.330:FF:000001">
    <property type="entry name" value="50S ribosomal protein L23"/>
    <property type="match status" value="1"/>
</dbReference>
<dbReference type="Gene3D" id="3.30.70.330">
    <property type="match status" value="1"/>
</dbReference>
<dbReference type="HAMAP" id="MF_01369_B">
    <property type="entry name" value="Ribosomal_uL23_B"/>
    <property type="match status" value="1"/>
</dbReference>
<dbReference type="InterPro" id="IPR012677">
    <property type="entry name" value="Nucleotide-bd_a/b_plait_sf"/>
</dbReference>
<dbReference type="InterPro" id="IPR013025">
    <property type="entry name" value="Ribosomal_uL23-like"/>
</dbReference>
<dbReference type="InterPro" id="IPR012678">
    <property type="entry name" value="Ribosomal_uL23/eL15/eS24_sf"/>
</dbReference>
<dbReference type="NCBIfam" id="NF004359">
    <property type="entry name" value="PRK05738.1-3"/>
    <property type="match status" value="1"/>
</dbReference>
<dbReference type="NCBIfam" id="NF004363">
    <property type="entry name" value="PRK05738.2-4"/>
    <property type="match status" value="1"/>
</dbReference>
<dbReference type="PANTHER" id="PTHR11620">
    <property type="entry name" value="60S RIBOSOMAL PROTEIN L23A"/>
    <property type="match status" value="1"/>
</dbReference>
<dbReference type="Pfam" id="PF00276">
    <property type="entry name" value="Ribosomal_L23"/>
    <property type="match status" value="1"/>
</dbReference>
<dbReference type="SUPFAM" id="SSF54189">
    <property type="entry name" value="Ribosomal proteins S24e, L23 and L15e"/>
    <property type="match status" value="1"/>
</dbReference>
<name>RL23_PSEPW</name>
<organism>
    <name type="scientific">Pseudomonas putida (strain W619)</name>
    <dbReference type="NCBI Taxonomy" id="390235"/>
    <lineage>
        <taxon>Bacteria</taxon>
        <taxon>Pseudomonadati</taxon>
        <taxon>Pseudomonadota</taxon>
        <taxon>Gammaproteobacteria</taxon>
        <taxon>Pseudomonadales</taxon>
        <taxon>Pseudomonadaceae</taxon>
        <taxon>Pseudomonas</taxon>
    </lineage>
</organism>
<comment type="function">
    <text evidence="1">One of the early assembly proteins it binds 23S rRNA. One of the proteins that surrounds the polypeptide exit tunnel on the outside of the ribosome. Forms the main docking site for trigger factor binding to the ribosome.</text>
</comment>
<comment type="subunit">
    <text evidence="1">Part of the 50S ribosomal subunit. Contacts protein L29, and trigger factor when it is bound to the ribosome.</text>
</comment>
<comment type="similarity">
    <text evidence="1">Belongs to the universal ribosomal protein uL23 family.</text>
</comment>
<proteinExistence type="inferred from homology"/>
<keyword id="KW-0687">Ribonucleoprotein</keyword>
<keyword id="KW-0689">Ribosomal protein</keyword>
<keyword id="KW-0694">RNA-binding</keyword>
<keyword id="KW-0699">rRNA-binding</keyword>
<sequence>MNQERVFKVLLGPHVSEKATVLAEKKGQFVFKVATDATKLEIKKAVEGLFNVKVENVSTVNVLGKTKRTARGLGKRNDWKKAIVSLQPGQDLDFSSSAE</sequence>
<evidence type="ECO:0000255" key="1">
    <source>
        <dbReference type="HAMAP-Rule" id="MF_01369"/>
    </source>
</evidence>
<evidence type="ECO:0000305" key="2"/>
<accession>B1JDW2</accession>